<keyword id="KW-0002">3D-structure</keyword>
<keyword id="KW-0903">Direct protein sequencing</keyword>
<keyword id="KW-0325">Glycoprotein</keyword>
<keyword id="KW-0430">Lectin</keyword>
<evidence type="ECO:0000250" key="1">
    <source>
        <dbReference type="UniProtKB" id="P16404"/>
    </source>
</evidence>
<evidence type="ECO:0000269" key="2">
    <source>
    </source>
</evidence>
<evidence type="ECO:0000305" key="3"/>
<evidence type="ECO:0007829" key="4">
    <source>
        <dbReference type="PDB" id="1GZ9"/>
    </source>
</evidence>
<evidence type="ECO:0007829" key="5">
    <source>
        <dbReference type="PDB" id="1GZC"/>
    </source>
</evidence>
<dbReference type="PDB" id="1GZ9">
    <property type="method" value="X-ray"/>
    <property type="resolution" value="1.70 A"/>
    <property type="chains" value="A=1-239"/>
</dbReference>
<dbReference type="PDB" id="1GZC">
    <property type="method" value="X-ray"/>
    <property type="resolution" value="1.58 A"/>
    <property type="chains" value="A=1-239"/>
</dbReference>
<dbReference type="PDBsum" id="1GZ9"/>
<dbReference type="PDBsum" id="1GZC"/>
<dbReference type="SMR" id="P83410"/>
<dbReference type="ChEMBL" id="CHEMBL1649057"/>
<dbReference type="UniLectin" id="P83410"/>
<dbReference type="iPTMnet" id="P83410"/>
<dbReference type="EvolutionaryTrace" id="P83410"/>
<dbReference type="GO" id="GO:0030246">
    <property type="term" value="F:carbohydrate binding"/>
    <property type="evidence" value="ECO:0007669"/>
    <property type="project" value="UniProtKB-KW"/>
</dbReference>
<dbReference type="CDD" id="cd06899">
    <property type="entry name" value="lectin_legume_LecRK_Arcelin_ConA"/>
    <property type="match status" value="1"/>
</dbReference>
<dbReference type="Gene3D" id="2.60.120.200">
    <property type="match status" value="1"/>
</dbReference>
<dbReference type="InterPro" id="IPR013320">
    <property type="entry name" value="ConA-like_dom_sf"/>
</dbReference>
<dbReference type="InterPro" id="IPR016363">
    <property type="entry name" value="L-lectin"/>
</dbReference>
<dbReference type="InterPro" id="IPR000985">
    <property type="entry name" value="Lectin_LegA_CS"/>
</dbReference>
<dbReference type="InterPro" id="IPR019825">
    <property type="entry name" value="Lectin_legB_Mn/Ca_BS"/>
</dbReference>
<dbReference type="InterPro" id="IPR001220">
    <property type="entry name" value="Legume_lectin_dom"/>
</dbReference>
<dbReference type="InterPro" id="IPR050258">
    <property type="entry name" value="Leguminous_Lectin"/>
</dbReference>
<dbReference type="PANTHER" id="PTHR32401">
    <property type="entry name" value="CONCANAVALIN A-LIKE LECTIN FAMILY PROTEIN"/>
    <property type="match status" value="1"/>
</dbReference>
<dbReference type="PANTHER" id="PTHR32401:SF45">
    <property type="entry name" value="LECTIN"/>
    <property type="match status" value="1"/>
</dbReference>
<dbReference type="Pfam" id="PF00139">
    <property type="entry name" value="Lectin_legB"/>
    <property type="match status" value="1"/>
</dbReference>
<dbReference type="PIRSF" id="PIRSF002690">
    <property type="entry name" value="L-type_lectin_plant"/>
    <property type="match status" value="1"/>
</dbReference>
<dbReference type="SUPFAM" id="SSF49899">
    <property type="entry name" value="Concanavalin A-like lectins/glucanases"/>
    <property type="match status" value="1"/>
</dbReference>
<dbReference type="PROSITE" id="PS00308">
    <property type="entry name" value="LECTIN_LEGUME_ALPHA"/>
    <property type="match status" value="1"/>
</dbReference>
<dbReference type="PROSITE" id="PS00307">
    <property type="entry name" value="LECTIN_LEGUME_BETA"/>
    <property type="match status" value="1"/>
</dbReference>
<name>LEC_ERYCG</name>
<accession>P83410</accession>
<proteinExistence type="evidence at protein level"/>
<protein>
    <recommendedName>
        <fullName>Lectin</fullName>
    </recommendedName>
    <alternativeName>
        <fullName>ECL</fullName>
    </alternativeName>
</protein>
<feature type="chain" id="PRO_0000105098" description="Lectin">
    <location>
        <begin position="1"/>
        <end position="239"/>
    </location>
</feature>
<feature type="glycosylation site" description="N-linked (GlcNAc...) asparagine" evidence="2">
    <location>
        <position position="17"/>
    </location>
</feature>
<feature type="glycosylation site" description="N-linked (GlcNAc...) asparagine">
    <location>
        <position position="113"/>
    </location>
</feature>
<feature type="sequence variant" evidence="2">
    <original>M</original>
    <variation>I</variation>
    <location>
        <position position="59"/>
    </location>
</feature>
<feature type="strand" evidence="5">
    <location>
        <begin position="2"/>
        <end position="10"/>
    </location>
</feature>
<feature type="strand" evidence="5">
    <location>
        <begin position="18"/>
        <end position="22"/>
    </location>
</feature>
<feature type="strand" evidence="5">
    <location>
        <begin position="32"/>
        <end position="35"/>
    </location>
</feature>
<feature type="strand" evidence="4">
    <location>
        <begin position="39"/>
        <end position="41"/>
    </location>
</feature>
<feature type="strand" evidence="5">
    <location>
        <begin position="48"/>
        <end position="55"/>
    </location>
</feature>
<feature type="turn" evidence="5">
    <location>
        <begin position="62"/>
        <end position="64"/>
    </location>
</feature>
<feature type="strand" evidence="5">
    <location>
        <begin position="69"/>
        <end position="77"/>
    </location>
</feature>
<feature type="strand" evidence="5">
    <location>
        <begin position="83"/>
        <end position="85"/>
    </location>
</feature>
<feature type="strand" evidence="5">
    <location>
        <begin position="89"/>
        <end position="96"/>
    </location>
</feature>
<feature type="helix" evidence="5">
    <location>
        <begin position="106"/>
        <end position="108"/>
    </location>
</feature>
<feature type="turn" evidence="5">
    <location>
        <begin position="109"/>
        <end position="111"/>
    </location>
</feature>
<feature type="strand" evidence="5">
    <location>
        <begin position="113"/>
        <end position="116"/>
    </location>
</feature>
<feature type="helix" evidence="5">
    <location>
        <begin position="119"/>
        <end position="121"/>
    </location>
</feature>
<feature type="strand" evidence="5">
    <location>
        <begin position="124"/>
        <end position="129"/>
    </location>
</feature>
<feature type="strand" evidence="5">
    <location>
        <begin position="138"/>
        <end position="151"/>
    </location>
</feature>
<feature type="strand" evidence="5">
    <location>
        <begin position="153"/>
        <end position="157"/>
    </location>
</feature>
<feature type="strand" evidence="5">
    <location>
        <begin position="165"/>
        <end position="173"/>
    </location>
</feature>
<feature type="turn" evidence="5">
    <location>
        <begin position="174"/>
        <end position="177"/>
    </location>
</feature>
<feature type="strand" evidence="5">
    <location>
        <begin position="178"/>
        <end position="184"/>
    </location>
</feature>
<feature type="turn" evidence="5">
    <location>
        <begin position="186"/>
        <end position="188"/>
    </location>
</feature>
<feature type="strand" evidence="5">
    <location>
        <begin position="191"/>
        <end position="197"/>
    </location>
</feature>
<feature type="helix" evidence="5">
    <location>
        <begin position="200"/>
        <end position="203"/>
    </location>
</feature>
<feature type="strand" evidence="5">
    <location>
        <begin position="206"/>
        <end position="216"/>
    </location>
</feature>
<feature type="strand" evidence="5">
    <location>
        <begin position="227"/>
        <end position="237"/>
    </location>
</feature>
<organism evidence="3">
    <name type="scientific">Erythrina crista-galli</name>
    <name type="common">Cockspur coral tree</name>
    <name type="synonym">Micropteryx crista-galli</name>
    <dbReference type="NCBI Taxonomy" id="49817"/>
    <lineage>
        <taxon>Eukaryota</taxon>
        <taxon>Viridiplantae</taxon>
        <taxon>Streptophyta</taxon>
        <taxon>Embryophyta</taxon>
        <taxon>Tracheophyta</taxon>
        <taxon>Spermatophyta</taxon>
        <taxon>Magnoliopsida</taxon>
        <taxon>eudicotyledons</taxon>
        <taxon>Gunneridae</taxon>
        <taxon>Pentapetalae</taxon>
        <taxon>rosids</taxon>
        <taxon>fabids</taxon>
        <taxon>Fabales</taxon>
        <taxon>Fabaceae</taxon>
        <taxon>Papilionoideae</taxon>
        <taxon>50 kb inversion clade</taxon>
        <taxon>NPAAA clade</taxon>
        <taxon>indigoferoid/millettioid clade</taxon>
        <taxon>Phaseoleae</taxon>
        <taxon>Erythrina</taxon>
    </lineage>
</organism>
<comment type="function">
    <text evidence="2">Galactose and N-acetyllactosamine specific lectin.</text>
</comment>
<comment type="subunit">
    <text evidence="2">Homodimer.</text>
</comment>
<comment type="miscellaneous">
    <text evidence="2">Binds one manganese ion and one calcium ion.</text>
</comment>
<comment type="similarity">
    <text evidence="1">Belongs to the leguminous lectin family.</text>
</comment>
<comment type="online information" name="Functional Glycomics Gateway - Glycan Binding">
    <link uri="https://www.functionalglycomics.org/glycan-array/1000702"/>
    <text>ECA</text>
</comment>
<sequence>VETISFSFSEFEPGNDNLTLQGAALITQSGVLQLTKINQNGMPAWDSTGRTLYTKPVHMWDSTTGTVASFETRFSFSIEQPYTRPLPADGLVFFMGPTKSKPAQGYGYLGVFNNSKQDNSYQTLAVEFDTFSNPWDPPQVPHIGIDVNSIRSIKTQPFQLDNGQVANVVIKYDAPSKILHVVLVYPSSGAIYTIAEIVDVKQVLPDWVDVGLSGATGAQRDAAETHDVYSWSFQASLPE</sequence>
<reference evidence="3" key="1">
    <citation type="journal article" date="2002" name="J. Mol. Biol.">
        <title>High-resolution crystal structures of Erythrina cristagalli lectin in complex with lactose and 2'-alpha-L-fucosyllactose and correlation with thermodynamic binding data.</title>
        <authorList>
            <person name="Svensson C."/>
            <person name="Teneberg S."/>
            <person name="Nilsson C.L."/>
            <person name="Kjellberg A."/>
            <person name="Schwarz F.P."/>
            <person name="Sharon N."/>
            <person name="Krengel U."/>
        </authorList>
    </citation>
    <scope>PARTIAL PROTEIN SEQUENCE</scope>
    <scope>X-RAY CRYSTALLOGRAPHY (1.7 ANGSTROMS)</scope>
    <scope>VARIANT ILE-59</scope>
</reference>